<gene>
    <name type="primary">Gpr132</name>
    <name type="synonym">G2a</name>
</gene>
<proteinExistence type="evidence at protein level"/>
<protein>
    <recommendedName>
        <fullName>Probable G-protein coupled receptor 132</fullName>
    </recommendedName>
    <alternativeName>
        <fullName>G2 accumulation protein</fullName>
    </alternativeName>
</protein>
<name>GP132_MOUSE</name>
<accession>Q9Z282</accession>
<accession>Q0VBS4</accession>
<accession>Q3U5A4</accession>
<dbReference type="EMBL" id="AF083442">
    <property type="protein sequence ID" value="AAC67542.1"/>
    <property type="molecule type" value="mRNA"/>
</dbReference>
<dbReference type="EMBL" id="AK089866">
    <property type="protein sequence ID" value="BAC40980.1"/>
    <property type="molecule type" value="mRNA"/>
</dbReference>
<dbReference type="EMBL" id="AK153765">
    <property type="protein sequence ID" value="BAE32176.1"/>
    <property type="molecule type" value="mRNA"/>
</dbReference>
<dbReference type="EMBL" id="BC120522">
    <property type="protein sequence ID" value="AAI20523.1"/>
    <property type="molecule type" value="mRNA"/>
</dbReference>
<dbReference type="EMBL" id="BC120524">
    <property type="protein sequence ID" value="AAI20525.1"/>
    <property type="molecule type" value="mRNA"/>
</dbReference>
<dbReference type="CCDS" id="CCDS26199.1"/>
<dbReference type="RefSeq" id="NP_064309.1">
    <property type="nucleotide sequence ID" value="NM_019925.4"/>
</dbReference>
<dbReference type="RefSeq" id="XP_006516165.1">
    <property type="nucleotide sequence ID" value="XM_006516102.4"/>
</dbReference>
<dbReference type="RefSeq" id="XP_006516166.1">
    <property type="nucleotide sequence ID" value="XM_006516103.2"/>
</dbReference>
<dbReference type="SMR" id="Q9Z282"/>
<dbReference type="FunCoup" id="Q9Z282">
    <property type="interactions" value="1058"/>
</dbReference>
<dbReference type="STRING" id="10090.ENSMUSP00000021729"/>
<dbReference type="GlyCosmos" id="Q9Z282">
    <property type="glycosylation" value="1 site, No reported glycans"/>
</dbReference>
<dbReference type="GlyGen" id="Q9Z282">
    <property type="glycosylation" value="1 site"/>
</dbReference>
<dbReference type="PhosphoSitePlus" id="Q9Z282"/>
<dbReference type="PaxDb" id="10090-ENSMUSP00000021729"/>
<dbReference type="ProteomicsDB" id="271133"/>
<dbReference type="DNASU" id="56696"/>
<dbReference type="Ensembl" id="ENSMUST00000021729.9">
    <property type="protein sequence ID" value="ENSMUSP00000021729.8"/>
    <property type="gene ID" value="ENSMUSG00000021298.9"/>
</dbReference>
<dbReference type="GeneID" id="56696"/>
<dbReference type="KEGG" id="mmu:56696"/>
<dbReference type="UCSC" id="uc007pfk.1">
    <property type="organism name" value="mouse"/>
</dbReference>
<dbReference type="AGR" id="MGI:1890220"/>
<dbReference type="CTD" id="29933"/>
<dbReference type="MGI" id="MGI:1890220">
    <property type="gene designation" value="Gpr132"/>
</dbReference>
<dbReference type="VEuPathDB" id="HostDB:ENSMUSG00000021298"/>
<dbReference type="eggNOG" id="ENOG502QQC1">
    <property type="taxonomic scope" value="Eukaryota"/>
</dbReference>
<dbReference type="GeneTree" id="ENSGT01130000278337"/>
<dbReference type="HOGENOM" id="CLU_009579_8_2_1"/>
<dbReference type="InParanoid" id="Q9Z282"/>
<dbReference type="OMA" id="SLCELMY"/>
<dbReference type="OrthoDB" id="8953154at2759"/>
<dbReference type="PhylomeDB" id="Q9Z282"/>
<dbReference type="TreeFam" id="TF331803"/>
<dbReference type="Reactome" id="R-MMU-373076">
    <property type="pathway name" value="Class A/1 (Rhodopsin-like receptors)"/>
</dbReference>
<dbReference type="Reactome" id="R-MMU-416476">
    <property type="pathway name" value="G alpha (q) signalling events"/>
</dbReference>
<dbReference type="BioGRID-ORCS" id="56696">
    <property type="hits" value="3 hits in 77 CRISPR screens"/>
</dbReference>
<dbReference type="PRO" id="PR:Q9Z282"/>
<dbReference type="Proteomes" id="UP000000589">
    <property type="component" value="Chromosome 12"/>
</dbReference>
<dbReference type="RNAct" id="Q9Z282">
    <property type="molecule type" value="protein"/>
</dbReference>
<dbReference type="Bgee" id="ENSMUSG00000021298">
    <property type="expression patterns" value="Expressed in thymus and 50 other cell types or tissues"/>
</dbReference>
<dbReference type="ExpressionAtlas" id="Q9Z282">
    <property type="expression patterns" value="baseline and differential"/>
</dbReference>
<dbReference type="GO" id="GO:0005886">
    <property type="term" value="C:plasma membrane"/>
    <property type="evidence" value="ECO:0000250"/>
    <property type="project" value="MGI"/>
</dbReference>
<dbReference type="GO" id="GO:0004930">
    <property type="term" value="F:G protein-coupled receptor activity"/>
    <property type="evidence" value="ECO:0000250"/>
    <property type="project" value="MGI"/>
</dbReference>
<dbReference type="GO" id="GO:0000082">
    <property type="term" value="P:G1/S transition of mitotic cell cycle"/>
    <property type="evidence" value="ECO:0000314"/>
    <property type="project" value="MGI"/>
</dbReference>
<dbReference type="GO" id="GO:0010972">
    <property type="term" value="P:negative regulation of G2/M transition of mitotic cell cycle"/>
    <property type="evidence" value="ECO:0000314"/>
    <property type="project" value="CACAO"/>
</dbReference>
<dbReference type="FunFam" id="1.20.1070.10:FF:000065">
    <property type="entry name" value="G-protein coupled receptor 4"/>
    <property type="match status" value="1"/>
</dbReference>
<dbReference type="Gene3D" id="1.20.1070.10">
    <property type="entry name" value="Rhodopsin 7-helix transmembrane proteins"/>
    <property type="match status" value="1"/>
</dbReference>
<dbReference type="InterPro" id="IPR005388">
    <property type="entry name" value="G2A_lysphc_rcpt"/>
</dbReference>
<dbReference type="InterPro" id="IPR000276">
    <property type="entry name" value="GPCR_Rhodpsn"/>
</dbReference>
<dbReference type="InterPro" id="IPR017452">
    <property type="entry name" value="GPCR_Rhodpsn_7TM"/>
</dbReference>
<dbReference type="PANTHER" id="PTHR24234:SF7">
    <property type="entry name" value="G-PROTEIN COUPLED RECEPTOR 132-RELATED"/>
    <property type="match status" value="1"/>
</dbReference>
<dbReference type="PANTHER" id="PTHR24234">
    <property type="entry name" value="LYSOPHOSPHATIDIC ACID RECEPTOR 5/SPHINGOSYLPHOSPHORYLCHOLINE RECEPTOR"/>
    <property type="match status" value="1"/>
</dbReference>
<dbReference type="Pfam" id="PF00001">
    <property type="entry name" value="7tm_1"/>
    <property type="match status" value="1"/>
</dbReference>
<dbReference type="PRINTS" id="PR01563">
    <property type="entry name" value="G2ARECEPTOR"/>
</dbReference>
<dbReference type="PRINTS" id="PR00237">
    <property type="entry name" value="GPCRRHODOPSN"/>
</dbReference>
<dbReference type="SUPFAM" id="SSF81321">
    <property type="entry name" value="Family A G protein-coupled receptor-like"/>
    <property type="match status" value="1"/>
</dbReference>
<dbReference type="PROSITE" id="PS00237">
    <property type="entry name" value="G_PROTEIN_RECEP_F1_1"/>
    <property type="match status" value="1"/>
</dbReference>
<dbReference type="PROSITE" id="PS50262">
    <property type="entry name" value="G_PROTEIN_RECEP_F1_2"/>
    <property type="match status" value="1"/>
</dbReference>
<keyword id="KW-1003">Cell membrane</keyword>
<keyword id="KW-1015">Disulfide bond</keyword>
<keyword id="KW-0297">G-protein coupled receptor</keyword>
<keyword id="KW-0325">Glycoprotein</keyword>
<keyword id="KW-0472">Membrane</keyword>
<keyword id="KW-0675">Receptor</keyword>
<keyword id="KW-1185">Reference proteome</keyword>
<keyword id="KW-0807">Transducer</keyword>
<keyword id="KW-0812">Transmembrane</keyword>
<keyword id="KW-1133">Transmembrane helix</keyword>
<evidence type="ECO:0000250" key="1"/>
<evidence type="ECO:0000255" key="2"/>
<evidence type="ECO:0000255" key="3">
    <source>
        <dbReference type="PROSITE-ProRule" id="PRU00521"/>
    </source>
</evidence>
<evidence type="ECO:0000269" key="4">
    <source>
    </source>
</evidence>
<evidence type="ECO:0000269" key="5">
    <source>
    </source>
</evidence>
<evidence type="ECO:0000305" key="6">
    <source>
    </source>
</evidence>
<reference key="1">
    <citation type="journal article" date="1998" name="Proc. Natl. Acad. Sci. U.S.A.">
        <title>A DNA damage and stress inducible G protein-coupled receptor blocks cells in G2/M.</title>
        <authorList>
            <person name="Weng Z."/>
            <person name="Fluckiger A.-C."/>
            <person name="Nisitani S."/>
            <person name="Wahl M.I."/>
            <person name="Le L.Q."/>
            <person name="Hunter C.A."/>
            <person name="Fernal A.A."/>
            <person name="Le Beau M.M."/>
            <person name="Witte O.N."/>
        </authorList>
    </citation>
    <scope>NUCLEOTIDE SEQUENCE [MRNA]</scope>
    <source>
        <tissue>Spleen</tissue>
    </source>
</reference>
<reference key="2">
    <citation type="journal article" date="2005" name="Science">
        <title>The transcriptional landscape of the mammalian genome.</title>
        <authorList>
            <person name="Carninci P."/>
            <person name="Kasukawa T."/>
            <person name="Katayama S."/>
            <person name="Gough J."/>
            <person name="Frith M.C."/>
            <person name="Maeda N."/>
            <person name="Oyama R."/>
            <person name="Ravasi T."/>
            <person name="Lenhard B."/>
            <person name="Wells C."/>
            <person name="Kodzius R."/>
            <person name="Shimokawa K."/>
            <person name="Bajic V.B."/>
            <person name="Brenner S.E."/>
            <person name="Batalov S."/>
            <person name="Forrest A.R."/>
            <person name="Zavolan M."/>
            <person name="Davis M.J."/>
            <person name="Wilming L.G."/>
            <person name="Aidinis V."/>
            <person name="Allen J.E."/>
            <person name="Ambesi-Impiombato A."/>
            <person name="Apweiler R."/>
            <person name="Aturaliya R.N."/>
            <person name="Bailey T.L."/>
            <person name="Bansal M."/>
            <person name="Baxter L."/>
            <person name="Beisel K.W."/>
            <person name="Bersano T."/>
            <person name="Bono H."/>
            <person name="Chalk A.M."/>
            <person name="Chiu K.P."/>
            <person name="Choudhary V."/>
            <person name="Christoffels A."/>
            <person name="Clutterbuck D.R."/>
            <person name="Crowe M.L."/>
            <person name="Dalla E."/>
            <person name="Dalrymple B.P."/>
            <person name="de Bono B."/>
            <person name="Della Gatta G."/>
            <person name="di Bernardo D."/>
            <person name="Down T."/>
            <person name="Engstrom P."/>
            <person name="Fagiolini M."/>
            <person name="Faulkner G."/>
            <person name="Fletcher C.F."/>
            <person name="Fukushima T."/>
            <person name="Furuno M."/>
            <person name="Futaki S."/>
            <person name="Gariboldi M."/>
            <person name="Georgii-Hemming P."/>
            <person name="Gingeras T.R."/>
            <person name="Gojobori T."/>
            <person name="Green R.E."/>
            <person name="Gustincich S."/>
            <person name="Harbers M."/>
            <person name="Hayashi Y."/>
            <person name="Hensch T.K."/>
            <person name="Hirokawa N."/>
            <person name="Hill D."/>
            <person name="Huminiecki L."/>
            <person name="Iacono M."/>
            <person name="Ikeo K."/>
            <person name="Iwama A."/>
            <person name="Ishikawa T."/>
            <person name="Jakt M."/>
            <person name="Kanapin A."/>
            <person name="Katoh M."/>
            <person name="Kawasawa Y."/>
            <person name="Kelso J."/>
            <person name="Kitamura H."/>
            <person name="Kitano H."/>
            <person name="Kollias G."/>
            <person name="Krishnan S.P."/>
            <person name="Kruger A."/>
            <person name="Kummerfeld S.K."/>
            <person name="Kurochkin I.V."/>
            <person name="Lareau L.F."/>
            <person name="Lazarevic D."/>
            <person name="Lipovich L."/>
            <person name="Liu J."/>
            <person name="Liuni S."/>
            <person name="McWilliam S."/>
            <person name="Madan Babu M."/>
            <person name="Madera M."/>
            <person name="Marchionni L."/>
            <person name="Matsuda H."/>
            <person name="Matsuzawa S."/>
            <person name="Miki H."/>
            <person name="Mignone F."/>
            <person name="Miyake S."/>
            <person name="Morris K."/>
            <person name="Mottagui-Tabar S."/>
            <person name="Mulder N."/>
            <person name="Nakano N."/>
            <person name="Nakauchi H."/>
            <person name="Ng P."/>
            <person name="Nilsson R."/>
            <person name="Nishiguchi S."/>
            <person name="Nishikawa S."/>
            <person name="Nori F."/>
            <person name="Ohara O."/>
            <person name="Okazaki Y."/>
            <person name="Orlando V."/>
            <person name="Pang K.C."/>
            <person name="Pavan W.J."/>
            <person name="Pavesi G."/>
            <person name="Pesole G."/>
            <person name="Petrovsky N."/>
            <person name="Piazza S."/>
            <person name="Reed J."/>
            <person name="Reid J.F."/>
            <person name="Ring B.Z."/>
            <person name="Ringwald M."/>
            <person name="Rost B."/>
            <person name="Ruan Y."/>
            <person name="Salzberg S.L."/>
            <person name="Sandelin A."/>
            <person name="Schneider C."/>
            <person name="Schoenbach C."/>
            <person name="Sekiguchi K."/>
            <person name="Semple C.A."/>
            <person name="Seno S."/>
            <person name="Sessa L."/>
            <person name="Sheng Y."/>
            <person name="Shibata Y."/>
            <person name="Shimada H."/>
            <person name="Shimada K."/>
            <person name="Silva D."/>
            <person name="Sinclair B."/>
            <person name="Sperling S."/>
            <person name="Stupka E."/>
            <person name="Sugiura K."/>
            <person name="Sultana R."/>
            <person name="Takenaka Y."/>
            <person name="Taki K."/>
            <person name="Tammoja K."/>
            <person name="Tan S.L."/>
            <person name="Tang S."/>
            <person name="Taylor M.S."/>
            <person name="Tegner J."/>
            <person name="Teichmann S.A."/>
            <person name="Ueda H.R."/>
            <person name="van Nimwegen E."/>
            <person name="Verardo R."/>
            <person name="Wei C.L."/>
            <person name="Yagi K."/>
            <person name="Yamanishi H."/>
            <person name="Zabarovsky E."/>
            <person name="Zhu S."/>
            <person name="Zimmer A."/>
            <person name="Hide W."/>
            <person name="Bult C."/>
            <person name="Grimmond S.M."/>
            <person name="Teasdale R.D."/>
            <person name="Liu E.T."/>
            <person name="Brusic V."/>
            <person name="Quackenbush J."/>
            <person name="Wahlestedt C."/>
            <person name="Mattick J.S."/>
            <person name="Hume D.A."/>
            <person name="Kai C."/>
            <person name="Sasaki D."/>
            <person name="Tomaru Y."/>
            <person name="Fukuda S."/>
            <person name="Kanamori-Katayama M."/>
            <person name="Suzuki M."/>
            <person name="Aoki J."/>
            <person name="Arakawa T."/>
            <person name="Iida J."/>
            <person name="Imamura K."/>
            <person name="Itoh M."/>
            <person name="Kato T."/>
            <person name="Kawaji H."/>
            <person name="Kawagashira N."/>
            <person name="Kawashima T."/>
            <person name="Kojima M."/>
            <person name="Kondo S."/>
            <person name="Konno H."/>
            <person name="Nakano K."/>
            <person name="Ninomiya N."/>
            <person name="Nishio T."/>
            <person name="Okada M."/>
            <person name="Plessy C."/>
            <person name="Shibata K."/>
            <person name="Shiraki T."/>
            <person name="Suzuki S."/>
            <person name="Tagami M."/>
            <person name="Waki K."/>
            <person name="Watahiki A."/>
            <person name="Okamura-Oho Y."/>
            <person name="Suzuki H."/>
            <person name="Kawai J."/>
            <person name="Hayashizaki Y."/>
        </authorList>
    </citation>
    <scope>NUCLEOTIDE SEQUENCE [LARGE SCALE MRNA]</scope>
    <source>
        <strain>C57BL/6J</strain>
        <strain>NOD</strain>
        <tissue>Spleen</tissue>
        <tissue>Thymus</tissue>
    </source>
</reference>
<reference key="3">
    <citation type="journal article" date="2004" name="Genome Res.">
        <title>The status, quality, and expansion of the NIH full-length cDNA project: the Mammalian Gene Collection (MGC).</title>
        <authorList>
            <consortium name="The MGC Project Team"/>
        </authorList>
    </citation>
    <scope>NUCLEOTIDE SEQUENCE [LARGE SCALE MRNA]</scope>
    <source>
        <tissue>Brain</tissue>
    </source>
</reference>
<reference key="4">
    <citation type="journal article" date="2002" name="Arterioscler. Thromb. Vasc. Biol.">
        <title>Expression of G2A, a receptor for lysophosphatidylcholine, by macrophages in murine, rabbit, and human atherosclerotic plaques.</title>
        <authorList>
            <person name="Rikitake Y."/>
            <person name="Hirata K."/>
            <person name="Yamashita T."/>
            <person name="Iwai K."/>
            <person name="Kobayashi S."/>
            <person name="Itoh H."/>
            <person name="Ozaki M."/>
            <person name="Ejiri J."/>
            <person name="Shiomi M."/>
            <person name="Inoue N."/>
            <person name="Kawashima S."/>
            <person name="Yokoyama M."/>
        </authorList>
    </citation>
    <scope>TISSUE SPECIFICITY</scope>
</reference>
<reference key="5">
    <citation type="journal article" date="2005" name="Mol. Biol. Cell">
        <title>Lysophosphatidylcholine-induced surface redistribution regulates signaling of the murine G protein-coupled receptor G2A.</title>
        <authorList>
            <person name="Wang L."/>
            <person name="Radu C.G."/>
            <person name="Yang L.V."/>
            <person name="Bentolila L.A."/>
            <person name="Riedinger M."/>
            <person name="Witte O.N."/>
        </authorList>
    </citation>
    <scope>FUNCTION</scope>
    <scope>SUBCELLULAR LOCATION</scope>
    <scope>MUTAGENESIS OF ARG-137</scope>
</reference>
<sequence>MRSEPTNAAGNTTLGVTSVLQSTSVPSSETCHVSYEESRVVLVVVYSAVCLLGLPANCLTAWLTLLQVLQRNVLAVYLFCLSLCELLYISTVPLWIIYIQNQHKWNLGPQACKVTAYIFFCNIYISILLLCCISCDRYMAVVYALESRGHRHQRTAVTISACVILLVGLVNYPVFDMKVEKSFCFEPLRMNSKIAGYHYLRFTFGFAIPLGILAFTNHQIFRSIKLSDSLSAAQKNKVKRSAIAVVTIFLVCFAPYHVVLLVKAASFSFYQGDMDAVCAFESRLYTVSMVFLCLSTVNSVADPIIYVLGTDHSRQEVSRIHTGWKKWSTKTYVTCSKDSEETHLPTELSNTYTFPNPAHPPGSQPAKLGLLCSPERLPEELC</sequence>
<organism>
    <name type="scientific">Mus musculus</name>
    <name type="common">Mouse</name>
    <dbReference type="NCBI Taxonomy" id="10090"/>
    <lineage>
        <taxon>Eukaryota</taxon>
        <taxon>Metazoa</taxon>
        <taxon>Chordata</taxon>
        <taxon>Craniata</taxon>
        <taxon>Vertebrata</taxon>
        <taxon>Euteleostomi</taxon>
        <taxon>Mammalia</taxon>
        <taxon>Eutheria</taxon>
        <taxon>Euarchontoglires</taxon>
        <taxon>Glires</taxon>
        <taxon>Rodentia</taxon>
        <taxon>Myomorpha</taxon>
        <taxon>Muroidea</taxon>
        <taxon>Muridae</taxon>
        <taxon>Murinae</taxon>
        <taxon>Mus</taxon>
        <taxon>Mus</taxon>
    </lineage>
</organism>
<comment type="function">
    <text evidence="1 5">May be a receptor for oxidized free fatty acids derived from linoleic and arachidonic acids such as 9-hydroxyoctadecadienoic acid (9-HODE). Activates a G alpha protein, most likely G alpha(q). May be involved in apoptosis. Functions at the G2/M checkpoint to delay mitosis. May function as a sensor that monitors the oxidative states and mediates appropriate cellular responses such as secretion of paracrine signals and attenuation of proliferation. May mediate ths accumulation of intracellular inositol phosphates at acidic pH through proton-sensing activity (By similarity).</text>
</comment>
<comment type="subcellular location">
    <subcellularLocation>
        <location evidence="6">Cell membrane</location>
        <topology evidence="6">Multi-pass membrane protein</topology>
    </subcellularLocation>
    <text>Internalized and accumulated in endosomal compartments. LPC triggers the relocalization from the endosomal compartment to the cell surface.</text>
</comment>
<comment type="tissue specificity">
    <text evidence="4">Highly expressed in hematopoietic tissues rich in lymphocytes like spleen and thymus. Weakly expressed in heart and lung. Highly expressed in infiltrating macrophages within atherosclerotic lesions.</text>
</comment>
<comment type="induction">
    <text>By DNA-damaging agents.</text>
</comment>
<comment type="similarity">
    <text evidence="3">Belongs to the G-protein coupled receptor 1 family.</text>
</comment>
<feature type="chain" id="PRO_0000069462" description="Probable G-protein coupled receptor 132">
    <location>
        <begin position="1"/>
        <end position="382"/>
    </location>
</feature>
<feature type="topological domain" description="Extracellular" evidence="2">
    <location>
        <begin position="1"/>
        <end position="42"/>
    </location>
</feature>
<feature type="transmembrane region" description="Helical; Name=1" evidence="2">
    <location>
        <begin position="43"/>
        <end position="65"/>
    </location>
</feature>
<feature type="topological domain" description="Cytoplasmic" evidence="2">
    <location>
        <begin position="66"/>
        <end position="76"/>
    </location>
</feature>
<feature type="transmembrane region" description="Helical; Name=2" evidence="2">
    <location>
        <begin position="77"/>
        <end position="99"/>
    </location>
</feature>
<feature type="topological domain" description="Extracellular" evidence="2">
    <location>
        <begin position="100"/>
        <end position="113"/>
    </location>
</feature>
<feature type="transmembrane region" description="Helical; Name=3" evidence="2">
    <location>
        <begin position="114"/>
        <end position="135"/>
    </location>
</feature>
<feature type="topological domain" description="Cytoplasmic" evidence="2">
    <location>
        <begin position="136"/>
        <end position="155"/>
    </location>
</feature>
<feature type="transmembrane region" description="Helical; Name=4" evidence="2">
    <location>
        <begin position="156"/>
        <end position="175"/>
    </location>
</feature>
<feature type="topological domain" description="Extracellular" evidence="2">
    <location>
        <begin position="176"/>
        <end position="198"/>
    </location>
</feature>
<feature type="transmembrane region" description="Helical; Name=5" evidence="2">
    <location>
        <begin position="199"/>
        <end position="221"/>
    </location>
</feature>
<feature type="topological domain" description="Cytoplasmic" evidence="2">
    <location>
        <begin position="222"/>
        <end position="241"/>
    </location>
</feature>
<feature type="transmembrane region" description="Helical; Name=6" evidence="2">
    <location>
        <begin position="242"/>
        <end position="261"/>
    </location>
</feature>
<feature type="topological domain" description="Extracellular" evidence="2">
    <location>
        <begin position="262"/>
        <end position="286"/>
    </location>
</feature>
<feature type="transmembrane region" description="Helical; Name=7" evidence="2">
    <location>
        <begin position="287"/>
        <end position="309"/>
    </location>
</feature>
<feature type="topological domain" description="Cytoplasmic" evidence="2">
    <location>
        <begin position="310"/>
        <end position="382"/>
    </location>
</feature>
<feature type="glycosylation site" description="N-linked (GlcNAc...) asparagine" evidence="2">
    <location>
        <position position="11"/>
    </location>
</feature>
<feature type="disulfide bond" evidence="3">
    <location>
        <begin position="112"/>
        <end position="184"/>
    </location>
</feature>
<feature type="mutagenesis site" description="Enhanced surface expression and a lower localization to endosomal vesicles." evidence="5">
    <original>R</original>
    <variation>A</variation>
    <location>
        <position position="137"/>
    </location>
</feature>